<name>SYC_RIPO1</name>
<organism>
    <name type="scientific">Rippkaea orientalis (strain PCC 8801 / RF-1)</name>
    <name type="common">Cyanothece sp. (strain PCC 8801)</name>
    <dbReference type="NCBI Taxonomy" id="41431"/>
    <lineage>
        <taxon>Bacteria</taxon>
        <taxon>Bacillati</taxon>
        <taxon>Cyanobacteriota</taxon>
        <taxon>Cyanophyceae</taxon>
        <taxon>Oscillatoriophycideae</taxon>
        <taxon>Chroococcales</taxon>
        <taxon>Aphanothecaceae</taxon>
        <taxon>Rippkaea</taxon>
        <taxon>Rippkaea orientalis</taxon>
    </lineage>
</organism>
<sequence length="484" mass="55056">MTLTVYNTLTRRKEPLETLETGKIRMYCCGITVYDYCHLGHARTCMVWDVVRRYLQWRGYEVQYIQNFTDIDDKILNRARQEGTTMEAVSDRFIEAYFEDMEHLHVQKADAYPRATHTLNGIKRLVSELEAKGYAYQSNGDVYYSVRHFKDYGKLSGRKLEDLQAGASGRVEVQDPEAAKKKDPFDFAVWKAAKPGEPSWDSPWGQGRPGWHIECSAMVRERLGETIDIHVGGSDLIFPHHENEIAQSEAATGKPLARYWLHNGMVKVEGEKMSKSLGNFITIRDLLDKVDPMAMRLFILQAHYRKPVDFTDEALEAATNGWHTLKEGLLFGYNHGKQLNFTASPPHPLTSSPLTQRFQQAVDDDFNFAGGLAILFEIAKELRKEGNILVHQGQTETSPQVLEEQWRTLVELAGVLGLETDISEVQEAVGNGLSDAEIEELIEQRKIARQNKNYAEGDRLRDELKNQGIILVDQPGGITTWHRS</sequence>
<comment type="catalytic activity">
    <reaction evidence="1">
        <text>tRNA(Cys) + L-cysteine + ATP = L-cysteinyl-tRNA(Cys) + AMP + diphosphate</text>
        <dbReference type="Rhea" id="RHEA:17773"/>
        <dbReference type="Rhea" id="RHEA-COMP:9661"/>
        <dbReference type="Rhea" id="RHEA-COMP:9679"/>
        <dbReference type="ChEBI" id="CHEBI:30616"/>
        <dbReference type="ChEBI" id="CHEBI:33019"/>
        <dbReference type="ChEBI" id="CHEBI:35235"/>
        <dbReference type="ChEBI" id="CHEBI:78442"/>
        <dbReference type="ChEBI" id="CHEBI:78517"/>
        <dbReference type="ChEBI" id="CHEBI:456215"/>
        <dbReference type="EC" id="6.1.1.16"/>
    </reaction>
</comment>
<comment type="cofactor">
    <cofactor evidence="1">
        <name>Zn(2+)</name>
        <dbReference type="ChEBI" id="CHEBI:29105"/>
    </cofactor>
    <text evidence="1">Binds 1 zinc ion per subunit.</text>
</comment>
<comment type="subunit">
    <text evidence="1">Monomer.</text>
</comment>
<comment type="subcellular location">
    <subcellularLocation>
        <location evidence="1">Cytoplasm</location>
    </subcellularLocation>
</comment>
<comment type="similarity">
    <text evidence="1">Belongs to the class-I aminoacyl-tRNA synthetase family.</text>
</comment>
<evidence type="ECO:0000255" key="1">
    <source>
        <dbReference type="HAMAP-Rule" id="MF_00041"/>
    </source>
</evidence>
<protein>
    <recommendedName>
        <fullName evidence="1">Cysteine--tRNA ligase</fullName>
        <ecNumber evidence="1">6.1.1.16</ecNumber>
    </recommendedName>
    <alternativeName>
        <fullName evidence="1">Cysteinyl-tRNA synthetase</fullName>
        <shortName evidence="1">CysRS</shortName>
    </alternativeName>
</protein>
<keyword id="KW-0030">Aminoacyl-tRNA synthetase</keyword>
<keyword id="KW-0067">ATP-binding</keyword>
<keyword id="KW-0963">Cytoplasm</keyword>
<keyword id="KW-0436">Ligase</keyword>
<keyword id="KW-0479">Metal-binding</keyword>
<keyword id="KW-0547">Nucleotide-binding</keyword>
<keyword id="KW-0648">Protein biosynthesis</keyword>
<keyword id="KW-1185">Reference proteome</keyword>
<keyword id="KW-0862">Zinc</keyword>
<proteinExistence type="inferred from homology"/>
<reference key="1">
    <citation type="journal article" date="2011" name="MBio">
        <title>Novel metabolic attributes of the genus Cyanothece, comprising a group of unicellular nitrogen-fixing Cyanobacteria.</title>
        <authorList>
            <person name="Bandyopadhyay A."/>
            <person name="Elvitigala T."/>
            <person name="Welsh E."/>
            <person name="Stockel J."/>
            <person name="Liberton M."/>
            <person name="Min H."/>
            <person name="Sherman L.A."/>
            <person name="Pakrasi H.B."/>
        </authorList>
    </citation>
    <scope>NUCLEOTIDE SEQUENCE [LARGE SCALE GENOMIC DNA]</scope>
    <source>
        <strain>PCC 8801 / RF-1</strain>
    </source>
</reference>
<dbReference type="EC" id="6.1.1.16" evidence="1"/>
<dbReference type="EMBL" id="CP001287">
    <property type="protein sequence ID" value="ACK64554.1"/>
    <property type="molecule type" value="Genomic_DNA"/>
</dbReference>
<dbReference type="RefSeq" id="WP_012593831.1">
    <property type="nucleotide sequence ID" value="NC_011726.1"/>
</dbReference>
<dbReference type="SMR" id="B7JUH4"/>
<dbReference type="STRING" id="41431.PCC8801_0458"/>
<dbReference type="KEGG" id="cyp:PCC8801_0458"/>
<dbReference type="eggNOG" id="COG0215">
    <property type="taxonomic scope" value="Bacteria"/>
</dbReference>
<dbReference type="HOGENOM" id="CLU_013528_0_1_3"/>
<dbReference type="OrthoDB" id="9815130at2"/>
<dbReference type="Proteomes" id="UP000008204">
    <property type="component" value="Chromosome"/>
</dbReference>
<dbReference type="GO" id="GO:0005829">
    <property type="term" value="C:cytosol"/>
    <property type="evidence" value="ECO:0007669"/>
    <property type="project" value="TreeGrafter"/>
</dbReference>
<dbReference type="GO" id="GO:0005524">
    <property type="term" value="F:ATP binding"/>
    <property type="evidence" value="ECO:0007669"/>
    <property type="project" value="UniProtKB-UniRule"/>
</dbReference>
<dbReference type="GO" id="GO:0004817">
    <property type="term" value="F:cysteine-tRNA ligase activity"/>
    <property type="evidence" value="ECO:0007669"/>
    <property type="project" value="UniProtKB-UniRule"/>
</dbReference>
<dbReference type="GO" id="GO:0008270">
    <property type="term" value="F:zinc ion binding"/>
    <property type="evidence" value="ECO:0007669"/>
    <property type="project" value="UniProtKB-UniRule"/>
</dbReference>
<dbReference type="GO" id="GO:0006423">
    <property type="term" value="P:cysteinyl-tRNA aminoacylation"/>
    <property type="evidence" value="ECO:0007669"/>
    <property type="project" value="UniProtKB-UniRule"/>
</dbReference>
<dbReference type="CDD" id="cd00672">
    <property type="entry name" value="CysRS_core"/>
    <property type="match status" value="1"/>
</dbReference>
<dbReference type="FunFam" id="3.40.50.620:FF:000009">
    <property type="entry name" value="Cysteine--tRNA ligase"/>
    <property type="match status" value="1"/>
</dbReference>
<dbReference type="Gene3D" id="1.20.120.1910">
    <property type="entry name" value="Cysteine-tRNA ligase, C-terminal anti-codon recognition domain"/>
    <property type="match status" value="1"/>
</dbReference>
<dbReference type="Gene3D" id="3.40.50.620">
    <property type="entry name" value="HUPs"/>
    <property type="match status" value="1"/>
</dbReference>
<dbReference type="HAMAP" id="MF_00041">
    <property type="entry name" value="Cys_tRNA_synth"/>
    <property type="match status" value="1"/>
</dbReference>
<dbReference type="InterPro" id="IPR015803">
    <property type="entry name" value="Cys-tRNA-ligase"/>
</dbReference>
<dbReference type="InterPro" id="IPR015273">
    <property type="entry name" value="Cys-tRNA-synt_Ia_DALR"/>
</dbReference>
<dbReference type="InterPro" id="IPR024909">
    <property type="entry name" value="Cys-tRNA/MSH_ligase"/>
</dbReference>
<dbReference type="InterPro" id="IPR056411">
    <property type="entry name" value="CysS_C"/>
</dbReference>
<dbReference type="InterPro" id="IPR014729">
    <property type="entry name" value="Rossmann-like_a/b/a_fold"/>
</dbReference>
<dbReference type="InterPro" id="IPR032678">
    <property type="entry name" value="tRNA-synt_1_cat_dom"/>
</dbReference>
<dbReference type="InterPro" id="IPR009080">
    <property type="entry name" value="tRNAsynth_Ia_anticodon-bd"/>
</dbReference>
<dbReference type="NCBIfam" id="TIGR00435">
    <property type="entry name" value="cysS"/>
    <property type="match status" value="1"/>
</dbReference>
<dbReference type="PANTHER" id="PTHR10890:SF3">
    <property type="entry name" value="CYSTEINE--TRNA LIGASE, CYTOPLASMIC"/>
    <property type="match status" value="1"/>
</dbReference>
<dbReference type="PANTHER" id="PTHR10890">
    <property type="entry name" value="CYSTEINYL-TRNA SYNTHETASE"/>
    <property type="match status" value="1"/>
</dbReference>
<dbReference type="Pfam" id="PF23493">
    <property type="entry name" value="CysS_C"/>
    <property type="match status" value="1"/>
</dbReference>
<dbReference type="Pfam" id="PF09190">
    <property type="entry name" value="DALR_2"/>
    <property type="match status" value="1"/>
</dbReference>
<dbReference type="Pfam" id="PF01406">
    <property type="entry name" value="tRNA-synt_1e"/>
    <property type="match status" value="1"/>
</dbReference>
<dbReference type="PRINTS" id="PR00983">
    <property type="entry name" value="TRNASYNTHCYS"/>
</dbReference>
<dbReference type="SMART" id="SM00840">
    <property type="entry name" value="DALR_2"/>
    <property type="match status" value="1"/>
</dbReference>
<dbReference type="SUPFAM" id="SSF47323">
    <property type="entry name" value="Anticodon-binding domain of a subclass of class I aminoacyl-tRNA synthetases"/>
    <property type="match status" value="1"/>
</dbReference>
<dbReference type="SUPFAM" id="SSF52374">
    <property type="entry name" value="Nucleotidylyl transferase"/>
    <property type="match status" value="1"/>
</dbReference>
<accession>B7JUH4</accession>
<gene>
    <name evidence="1" type="primary">cysS</name>
    <name type="ordered locus">PCC8801_0458</name>
</gene>
<feature type="chain" id="PRO_1000199055" description="Cysteine--tRNA ligase">
    <location>
        <begin position="1"/>
        <end position="484"/>
    </location>
</feature>
<feature type="short sequence motif" description="'HIGH' region">
    <location>
        <begin position="31"/>
        <end position="41"/>
    </location>
</feature>
<feature type="short sequence motif" description="'KMSKS' region">
    <location>
        <begin position="272"/>
        <end position="276"/>
    </location>
</feature>
<feature type="binding site" evidence="1">
    <location>
        <position position="29"/>
    </location>
    <ligand>
        <name>Zn(2+)</name>
        <dbReference type="ChEBI" id="CHEBI:29105"/>
    </ligand>
</feature>
<feature type="binding site" evidence="1">
    <location>
        <position position="215"/>
    </location>
    <ligand>
        <name>Zn(2+)</name>
        <dbReference type="ChEBI" id="CHEBI:29105"/>
    </ligand>
</feature>
<feature type="binding site" evidence="1">
    <location>
        <position position="240"/>
    </location>
    <ligand>
        <name>Zn(2+)</name>
        <dbReference type="ChEBI" id="CHEBI:29105"/>
    </ligand>
</feature>
<feature type="binding site" evidence="1">
    <location>
        <position position="244"/>
    </location>
    <ligand>
        <name>Zn(2+)</name>
        <dbReference type="ChEBI" id="CHEBI:29105"/>
    </ligand>
</feature>
<feature type="binding site" evidence="1">
    <location>
        <position position="275"/>
    </location>
    <ligand>
        <name>ATP</name>
        <dbReference type="ChEBI" id="CHEBI:30616"/>
    </ligand>
</feature>